<feature type="chain" id="PRO_0000416138" description="NAC domain-containing protein 89">
    <location>
        <begin position="1"/>
        <end position="340"/>
    </location>
</feature>
<feature type="domain" description="NAC" evidence="1">
    <location>
        <begin position="21"/>
        <end position="164"/>
    </location>
</feature>
<feature type="DNA-binding region" evidence="1">
    <location>
        <begin position="119"/>
        <end position="170"/>
    </location>
</feature>
<feature type="region of interest" description="Disordered" evidence="2">
    <location>
        <begin position="167"/>
        <end position="198"/>
    </location>
</feature>
<feature type="compositionally biased region" description="Polar residues" evidence="2">
    <location>
        <begin position="167"/>
        <end position="181"/>
    </location>
</feature>
<keyword id="KW-0963">Cytoplasm</keyword>
<keyword id="KW-0238">DNA-binding</keyword>
<keyword id="KW-0539">Nucleus</keyword>
<keyword id="KW-1185">Reference proteome</keyword>
<keyword id="KW-0804">Transcription</keyword>
<keyword id="KW-0805">Transcription regulation</keyword>
<name>NAC89_ARATH</name>
<proteinExistence type="evidence at protein level"/>
<protein>
    <recommendedName>
        <fullName>NAC domain-containing protein 89</fullName>
        <shortName>ANAC089</shortName>
    </recommendedName>
    <alternativeName>
        <fullName>Protein FRUCTOSE-SENSING QUANTITATIVE TRAIT LOCUS 6</fullName>
    </alternativeName>
</protein>
<accession>Q94F58</accession>
<accession>Q9FMS2</accession>
<comment type="function">
    <text evidence="3">Transcription factor involved in plant cell division.</text>
</comment>
<comment type="subunit">
    <text evidence="3">Interacts with PAS1.</text>
</comment>
<comment type="interaction">
    <interactant intactId="EBI-2319707">
        <id>Q94F58</id>
    </interactant>
    <interactant intactId="EBI-4429269">
        <id>Q9LVC0</id>
        <label>AGP14</label>
    </interactant>
    <organismsDiffer>false</organismsDiffer>
    <experiments>2</experiments>
</comment>
<comment type="interaction">
    <interactant intactId="EBI-2319707">
        <id>Q94F58</id>
    </interactant>
    <interactant intactId="EBI-4440466">
        <id>Q9FI10</id>
        <label>At5g44550</label>
    </interactant>
    <organismsDiffer>false</organismsDiffer>
    <experiments>2</experiments>
</comment>
<comment type="interaction">
    <interactant intactId="EBI-2319707">
        <id>Q94F58</id>
    </interactant>
    <interactant intactId="EBI-637668">
        <id>Q7DMA9</id>
        <label>PAS1</label>
    </interactant>
    <organismsDiffer>false</organismsDiffer>
    <experiments>6</experiments>
</comment>
<comment type="interaction">
    <interactant intactId="EBI-2319707">
        <id>Q94F58</id>
    </interactant>
    <interactant intactId="EBI-25522494">
        <id>O80995</id>
        <label>PDF1.3</label>
    </interactant>
    <organismsDiffer>false</organismsDiffer>
    <experiments>3</experiments>
</comment>
<comment type="interaction">
    <interactant intactId="EBI-2319707">
        <id>Q94F58</id>
    </interactant>
    <interactant intactId="EBI-2349683">
        <id>O80920</id>
        <label>PYL4</label>
    </interactant>
    <organismsDiffer>false</organismsDiffer>
    <experiments>3</experiments>
</comment>
<comment type="interaction">
    <interactant intactId="EBI-2319707">
        <id>Q94F58</id>
    </interactant>
    <interactant intactId="EBI-2363203">
        <id>Q1ECF1</id>
        <label>PYL7</label>
    </interactant>
    <organismsDiffer>false</organismsDiffer>
    <experiments>3</experiments>
</comment>
<comment type="interaction">
    <interactant intactId="EBI-2319707">
        <id>Q94F58</id>
    </interactant>
    <interactant intactId="EBI-2349513">
        <id>Q84MC7</id>
        <label>PYL9</label>
    </interactant>
    <organismsDiffer>false</organismsDiffer>
    <experiments>3</experiments>
</comment>
<comment type="interaction">
    <interactant intactId="EBI-2319707">
        <id>Q94F58</id>
    </interactant>
    <interactant intactId="EBI-2352074">
        <id>P82874</id>
        <label>TOM20-3</label>
    </interactant>
    <organismsDiffer>false</organismsDiffer>
    <experiments>2</experiments>
</comment>
<comment type="subcellular location">
    <subcellularLocation>
        <location evidence="4">Cytoplasm</location>
    </subcellularLocation>
    <subcellularLocation>
        <location evidence="1">Nucleus</location>
    </subcellularLocation>
    <text evidence="3">Relocalization from the cytoplasm into the nucleus is induced by auxin treatment and in association with PAS1.</text>
</comment>
<comment type="domain">
    <text>The NAC domain includes a DNA-binding domain and a dimerization domain.</text>
</comment>
<comment type="sequence caution" evidence="4">
    <conflict type="erroneous initiation">
        <sequence resource="EMBL-CDS" id="BAB08327"/>
    </conflict>
    <text>Truncated N-terminus.</text>
</comment>
<organism>
    <name type="scientific">Arabidopsis thaliana</name>
    <name type="common">Mouse-ear cress</name>
    <dbReference type="NCBI Taxonomy" id="3702"/>
    <lineage>
        <taxon>Eukaryota</taxon>
        <taxon>Viridiplantae</taxon>
        <taxon>Streptophyta</taxon>
        <taxon>Embryophyta</taxon>
        <taxon>Tracheophyta</taxon>
        <taxon>Spermatophyta</taxon>
        <taxon>Magnoliopsida</taxon>
        <taxon>eudicotyledons</taxon>
        <taxon>Gunneridae</taxon>
        <taxon>Pentapetalae</taxon>
        <taxon>rosids</taxon>
        <taxon>malvids</taxon>
        <taxon>Brassicales</taxon>
        <taxon>Brassicaceae</taxon>
        <taxon>Camelineae</taxon>
        <taxon>Arabidopsis</taxon>
    </lineage>
</organism>
<dbReference type="EMBL" id="AB007651">
    <property type="protein sequence ID" value="BAB08327.1"/>
    <property type="status" value="ALT_INIT"/>
    <property type="molecule type" value="Genomic_DNA"/>
</dbReference>
<dbReference type="EMBL" id="AL589883">
    <property type="status" value="NOT_ANNOTATED_CDS"/>
    <property type="molecule type" value="Genomic_DNA"/>
</dbReference>
<dbReference type="EMBL" id="CP002688">
    <property type="protein sequence ID" value="AED93007.1"/>
    <property type="molecule type" value="Genomic_DNA"/>
</dbReference>
<dbReference type="EMBL" id="AF385685">
    <property type="protein sequence ID" value="AAK60278.1"/>
    <property type="molecule type" value="mRNA"/>
</dbReference>
<dbReference type="EMBL" id="AY078006">
    <property type="protein sequence ID" value="AAL77707.1"/>
    <property type="molecule type" value="mRNA"/>
</dbReference>
<dbReference type="RefSeq" id="NP_568414.1">
    <property type="nucleotide sequence ID" value="NM_122134.4"/>
</dbReference>
<dbReference type="SMR" id="Q94F58"/>
<dbReference type="BioGRID" id="17564">
    <property type="interactions" value="242"/>
</dbReference>
<dbReference type="FunCoup" id="Q94F58">
    <property type="interactions" value="39"/>
</dbReference>
<dbReference type="IntAct" id="Q94F58">
    <property type="interactions" value="288"/>
</dbReference>
<dbReference type="STRING" id="3702.Q94F58"/>
<dbReference type="PaxDb" id="3702-AT5G22290.1"/>
<dbReference type="ProteomicsDB" id="251238"/>
<dbReference type="EnsemblPlants" id="AT5G22290.1">
    <property type="protein sequence ID" value="AT5G22290.1"/>
    <property type="gene ID" value="AT5G22290"/>
</dbReference>
<dbReference type="GeneID" id="832289"/>
<dbReference type="Gramene" id="AT5G22290.1">
    <property type="protein sequence ID" value="AT5G22290.1"/>
    <property type="gene ID" value="AT5G22290"/>
</dbReference>
<dbReference type="KEGG" id="ath:AT5G22290"/>
<dbReference type="Araport" id="AT5G22290"/>
<dbReference type="TAIR" id="AT5G22290">
    <property type="gene designation" value="NAC089"/>
</dbReference>
<dbReference type="eggNOG" id="ENOG502QRAU">
    <property type="taxonomic scope" value="Eukaryota"/>
</dbReference>
<dbReference type="HOGENOM" id="CLU_035664_18_0_1"/>
<dbReference type="InParanoid" id="Q94F58"/>
<dbReference type="OMA" id="YCMKGVS"/>
<dbReference type="PhylomeDB" id="Q94F58"/>
<dbReference type="PRO" id="PR:Q94F58"/>
<dbReference type="Proteomes" id="UP000006548">
    <property type="component" value="Chromosome 5"/>
</dbReference>
<dbReference type="ExpressionAtlas" id="Q94F58">
    <property type="expression patterns" value="baseline and differential"/>
</dbReference>
<dbReference type="GO" id="GO:0005783">
    <property type="term" value="C:endoplasmic reticulum"/>
    <property type="evidence" value="ECO:0000314"/>
    <property type="project" value="TAIR"/>
</dbReference>
<dbReference type="GO" id="GO:0005634">
    <property type="term" value="C:nucleus"/>
    <property type="evidence" value="ECO:0000314"/>
    <property type="project" value="TAIR"/>
</dbReference>
<dbReference type="GO" id="GO:0003700">
    <property type="term" value="F:DNA-binding transcription factor activity"/>
    <property type="evidence" value="ECO:0000315"/>
    <property type="project" value="TAIR"/>
</dbReference>
<dbReference type="GO" id="GO:0000976">
    <property type="term" value="F:transcription cis-regulatory region binding"/>
    <property type="evidence" value="ECO:0000353"/>
    <property type="project" value="TAIR"/>
</dbReference>
<dbReference type="GO" id="GO:0009910">
    <property type="term" value="P:negative regulation of flower development"/>
    <property type="evidence" value="ECO:0000315"/>
    <property type="project" value="TAIR"/>
</dbReference>
<dbReference type="GO" id="GO:0009626">
    <property type="term" value="P:plant-type hypersensitive response"/>
    <property type="evidence" value="ECO:0000315"/>
    <property type="project" value="TAIR"/>
</dbReference>
<dbReference type="GO" id="GO:0045893">
    <property type="term" value="P:positive regulation of DNA-templated transcription"/>
    <property type="evidence" value="ECO:0000314"/>
    <property type="project" value="TAIR"/>
</dbReference>
<dbReference type="GO" id="GO:0034976">
    <property type="term" value="P:response to endoplasmic reticulum stress"/>
    <property type="evidence" value="ECO:0000315"/>
    <property type="project" value="TAIR"/>
</dbReference>
<dbReference type="FunFam" id="2.170.150.80:FF:000006">
    <property type="entry name" value="NAC domain-containing protein 100-like"/>
    <property type="match status" value="1"/>
</dbReference>
<dbReference type="Gene3D" id="2.170.150.80">
    <property type="entry name" value="NAC domain"/>
    <property type="match status" value="1"/>
</dbReference>
<dbReference type="InterPro" id="IPR003441">
    <property type="entry name" value="NAC-dom"/>
</dbReference>
<dbReference type="InterPro" id="IPR036093">
    <property type="entry name" value="NAC_dom_sf"/>
</dbReference>
<dbReference type="PANTHER" id="PTHR31744:SF210">
    <property type="entry name" value="NAC DOMAIN-CONTAINING PROTEIN 86-LIKE"/>
    <property type="match status" value="1"/>
</dbReference>
<dbReference type="PANTHER" id="PTHR31744">
    <property type="entry name" value="PROTEIN CUP-SHAPED COTYLEDON 2-RELATED"/>
    <property type="match status" value="1"/>
</dbReference>
<dbReference type="Pfam" id="PF02365">
    <property type="entry name" value="NAM"/>
    <property type="match status" value="1"/>
</dbReference>
<dbReference type="SUPFAM" id="SSF101941">
    <property type="entry name" value="NAC domain"/>
    <property type="match status" value="1"/>
</dbReference>
<dbReference type="PROSITE" id="PS51005">
    <property type="entry name" value="NAC"/>
    <property type="match status" value="1"/>
</dbReference>
<sequence length="340" mass="38046">MDTKAVGVSKDTAASMEASTVFPGFKFSPTDVELISYYLKRKMDGLERSVEVIPDLEIYNFEPWDLPDKSIVKSDSEWFFFCARGKKYPHGSQNRRATKMGYWKATGKERDVKSGSEVIGTKRTLVFHIGRAPKGERTDWIMHEYCVKGVSLDDAMVVCRVRRNKEYNSGTSQKAPKPNSSAEKHAKVQNGATSSGSPSDWDNLVDFYLAGESGEKLLAEMAESSENLQVDNDEDFFADILRDEIINLDEAVMTGNTPNEVPTLESASMEIRVLPLPNMIDKQMSSLLEERPSQKKKGKDATESLSSCFVGLYSIKSVNKARWDVIIGVVALIAMLFYLE</sequence>
<reference key="1">
    <citation type="journal article" date="1997" name="DNA Res.">
        <title>Structural analysis of Arabidopsis thaliana chromosome 5. III. Sequence features of the regions of 1,191,918 bp covered by seventeen physically assigned P1 clones.</title>
        <authorList>
            <person name="Nakamura Y."/>
            <person name="Sato S."/>
            <person name="Kaneko T."/>
            <person name="Kotani H."/>
            <person name="Asamizu E."/>
            <person name="Miyajima N."/>
            <person name="Tabata S."/>
        </authorList>
    </citation>
    <scope>NUCLEOTIDE SEQUENCE [LARGE SCALE GENOMIC DNA]</scope>
    <source>
        <strain>cv. Columbia</strain>
    </source>
</reference>
<reference key="2">
    <citation type="journal article" date="2000" name="Nature">
        <title>Sequence and analysis of chromosome 5 of the plant Arabidopsis thaliana.</title>
        <authorList>
            <person name="Tabata S."/>
            <person name="Kaneko T."/>
            <person name="Nakamura Y."/>
            <person name="Kotani H."/>
            <person name="Kato T."/>
            <person name="Asamizu E."/>
            <person name="Miyajima N."/>
            <person name="Sasamoto S."/>
            <person name="Kimura T."/>
            <person name="Hosouchi T."/>
            <person name="Kawashima K."/>
            <person name="Kohara M."/>
            <person name="Matsumoto M."/>
            <person name="Matsuno A."/>
            <person name="Muraki A."/>
            <person name="Nakayama S."/>
            <person name="Nakazaki N."/>
            <person name="Naruo K."/>
            <person name="Okumura S."/>
            <person name="Shinpo S."/>
            <person name="Takeuchi C."/>
            <person name="Wada T."/>
            <person name="Watanabe A."/>
            <person name="Yamada M."/>
            <person name="Yasuda M."/>
            <person name="Sato S."/>
            <person name="de la Bastide M."/>
            <person name="Huang E."/>
            <person name="Spiegel L."/>
            <person name="Gnoj L."/>
            <person name="O'Shaughnessy A."/>
            <person name="Preston R."/>
            <person name="Habermann K."/>
            <person name="Murray J."/>
            <person name="Johnson D."/>
            <person name="Rohlfing T."/>
            <person name="Nelson J."/>
            <person name="Stoneking T."/>
            <person name="Pepin K."/>
            <person name="Spieth J."/>
            <person name="Sekhon M."/>
            <person name="Armstrong J."/>
            <person name="Becker M."/>
            <person name="Belter E."/>
            <person name="Cordum H."/>
            <person name="Cordes M."/>
            <person name="Courtney L."/>
            <person name="Courtney W."/>
            <person name="Dante M."/>
            <person name="Du H."/>
            <person name="Edwards J."/>
            <person name="Fryman J."/>
            <person name="Haakensen B."/>
            <person name="Lamar E."/>
            <person name="Latreille P."/>
            <person name="Leonard S."/>
            <person name="Meyer R."/>
            <person name="Mulvaney E."/>
            <person name="Ozersky P."/>
            <person name="Riley A."/>
            <person name="Strowmatt C."/>
            <person name="Wagner-McPherson C."/>
            <person name="Wollam A."/>
            <person name="Yoakum M."/>
            <person name="Bell M."/>
            <person name="Dedhia N."/>
            <person name="Parnell L."/>
            <person name="Shah R."/>
            <person name="Rodriguez M."/>
            <person name="Hoon See L."/>
            <person name="Vil D."/>
            <person name="Baker J."/>
            <person name="Kirchoff K."/>
            <person name="Toth K."/>
            <person name="King L."/>
            <person name="Bahret A."/>
            <person name="Miller B."/>
            <person name="Marra M.A."/>
            <person name="Martienssen R."/>
            <person name="McCombie W.R."/>
            <person name="Wilson R.K."/>
            <person name="Murphy G."/>
            <person name="Bancroft I."/>
            <person name="Volckaert G."/>
            <person name="Wambutt R."/>
            <person name="Duesterhoeft A."/>
            <person name="Stiekema W."/>
            <person name="Pohl T."/>
            <person name="Entian K.-D."/>
            <person name="Terryn N."/>
            <person name="Hartley N."/>
            <person name="Bent E."/>
            <person name="Johnson S."/>
            <person name="Langham S.-A."/>
            <person name="McCullagh B."/>
            <person name="Robben J."/>
            <person name="Grymonprez B."/>
            <person name="Zimmermann W."/>
            <person name="Ramsperger U."/>
            <person name="Wedler H."/>
            <person name="Balke K."/>
            <person name="Wedler E."/>
            <person name="Peters S."/>
            <person name="van Staveren M."/>
            <person name="Dirkse W."/>
            <person name="Mooijman P."/>
            <person name="Klein Lankhorst R."/>
            <person name="Weitzenegger T."/>
            <person name="Bothe G."/>
            <person name="Rose M."/>
            <person name="Hauf J."/>
            <person name="Berneiser S."/>
            <person name="Hempel S."/>
            <person name="Feldpausch M."/>
            <person name="Lamberth S."/>
            <person name="Villarroel R."/>
            <person name="Gielen J."/>
            <person name="Ardiles W."/>
            <person name="Bents O."/>
            <person name="Lemcke K."/>
            <person name="Kolesov G."/>
            <person name="Mayer K.F.X."/>
            <person name="Rudd S."/>
            <person name="Schoof H."/>
            <person name="Schueller C."/>
            <person name="Zaccaria P."/>
            <person name="Mewes H.-W."/>
            <person name="Bevan M."/>
            <person name="Fransz P.F."/>
        </authorList>
    </citation>
    <scope>NUCLEOTIDE SEQUENCE [LARGE SCALE GENOMIC DNA]</scope>
    <source>
        <strain>cv. Columbia</strain>
    </source>
</reference>
<reference key="3">
    <citation type="journal article" date="2017" name="Plant J.">
        <title>Araport11: a complete reannotation of the Arabidopsis thaliana reference genome.</title>
        <authorList>
            <person name="Cheng C.Y."/>
            <person name="Krishnakumar V."/>
            <person name="Chan A.P."/>
            <person name="Thibaud-Nissen F."/>
            <person name="Schobel S."/>
            <person name="Town C.D."/>
        </authorList>
    </citation>
    <scope>GENOME REANNOTATION</scope>
    <source>
        <strain>cv. Columbia</strain>
    </source>
</reference>
<reference key="4">
    <citation type="journal article" date="2003" name="Science">
        <title>Empirical analysis of transcriptional activity in the Arabidopsis genome.</title>
        <authorList>
            <person name="Yamada K."/>
            <person name="Lim J."/>
            <person name="Dale J.M."/>
            <person name="Chen H."/>
            <person name="Shinn P."/>
            <person name="Palm C.J."/>
            <person name="Southwick A.M."/>
            <person name="Wu H.C."/>
            <person name="Kim C.J."/>
            <person name="Nguyen M."/>
            <person name="Pham P.K."/>
            <person name="Cheuk R.F."/>
            <person name="Karlin-Newmann G."/>
            <person name="Liu S.X."/>
            <person name="Lam B."/>
            <person name="Sakano H."/>
            <person name="Wu T."/>
            <person name="Yu G."/>
            <person name="Miranda M."/>
            <person name="Quach H.L."/>
            <person name="Tripp M."/>
            <person name="Chang C.H."/>
            <person name="Lee J.M."/>
            <person name="Toriumi M.J."/>
            <person name="Chan M.M."/>
            <person name="Tang C.C."/>
            <person name="Onodera C.S."/>
            <person name="Deng J.M."/>
            <person name="Akiyama K."/>
            <person name="Ansari Y."/>
            <person name="Arakawa T."/>
            <person name="Banh J."/>
            <person name="Banno F."/>
            <person name="Bowser L."/>
            <person name="Brooks S.Y."/>
            <person name="Carninci P."/>
            <person name="Chao Q."/>
            <person name="Choy N."/>
            <person name="Enju A."/>
            <person name="Goldsmith A.D."/>
            <person name="Gurjal M."/>
            <person name="Hansen N.F."/>
            <person name="Hayashizaki Y."/>
            <person name="Johnson-Hopson C."/>
            <person name="Hsuan V.W."/>
            <person name="Iida K."/>
            <person name="Karnes M."/>
            <person name="Khan S."/>
            <person name="Koesema E."/>
            <person name="Ishida J."/>
            <person name="Jiang P.X."/>
            <person name="Jones T."/>
            <person name="Kawai J."/>
            <person name="Kamiya A."/>
            <person name="Meyers C."/>
            <person name="Nakajima M."/>
            <person name="Narusaka M."/>
            <person name="Seki M."/>
            <person name="Sakurai T."/>
            <person name="Satou M."/>
            <person name="Tamse R."/>
            <person name="Vaysberg M."/>
            <person name="Wallender E.K."/>
            <person name="Wong C."/>
            <person name="Yamamura Y."/>
            <person name="Yuan S."/>
            <person name="Shinozaki K."/>
            <person name="Davis R.W."/>
            <person name="Theologis A."/>
            <person name="Ecker J.R."/>
        </authorList>
    </citation>
    <scope>NUCLEOTIDE SEQUENCE [LARGE SCALE MRNA]</scope>
    <source>
        <strain>cv. Columbia</strain>
    </source>
</reference>
<reference key="5">
    <citation type="journal article" date="2003" name="DNA Res.">
        <title>Comprehensive analysis of NAC family genes in Oryza sativa and Arabidopsis thaliana.</title>
        <authorList>
            <person name="Ooka H."/>
            <person name="Satoh K."/>
            <person name="Doi K."/>
            <person name="Nagata T."/>
            <person name="Otomo Y."/>
            <person name="Murakami K."/>
            <person name="Matsubara K."/>
            <person name="Osato N."/>
            <person name="Kawai J."/>
            <person name="Carninci P."/>
            <person name="Hayashizaki Y."/>
            <person name="Suzuki K."/>
            <person name="Kojima K."/>
            <person name="Takahara Y."/>
            <person name="Yamamoto K."/>
            <person name="Kikuchi S."/>
        </authorList>
    </citation>
    <scope>GENE FAMILY</scope>
    <scope>NOMENCLATURE</scope>
</reference>
<reference key="6">
    <citation type="journal article" date="2006" name="J. Biol. Chem.">
        <title>The C terminus of the immunophilin PASTICCINO1 is required for plant development and for interaction with a NAC-like transcription factor.</title>
        <authorList>
            <person name="Smyczynski C."/>
            <person name="Roudier F."/>
            <person name="Gissot L."/>
            <person name="Vaillant E."/>
            <person name="Grandjean O."/>
            <person name="Morin H."/>
            <person name="Masson T."/>
            <person name="Bellec Y."/>
            <person name="Geelen D."/>
            <person name="Faure J.D."/>
        </authorList>
    </citation>
    <scope>FUNCTION</scope>
    <scope>INTERACTION WITH PAS1</scope>
    <scope>SUBCELLULAR LOCATION</scope>
</reference>
<evidence type="ECO:0000255" key="1">
    <source>
        <dbReference type="PROSITE-ProRule" id="PRU00353"/>
    </source>
</evidence>
<evidence type="ECO:0000256" key="2">
    <source>
        <dbReference type="SAM" id="MobiDB-lite"/>
    </source>
</evidence>
<evidence type="ECO:0000269" key="3">
    <source>
    </source>
</evidence>
<evidence type="ECO:0000305" key="4"/>
<gene>
    <name type="primary">NAC089</name>
    <name type="synonym">FAN</name>
    <name type="synonym">FSQ6</name>
    <name type="ordered locus">At5g22290</name>
    <name type="ORF">MWD9.7</name>
    <name type="ORF">T6G21.9</name>
</gene>